<dbReference type="EC" id="2.1.3.15" evidence="1"/>
<dbReference type="EMBL" id="CP001186">
    <property type="protein sequence ID" value="ACK94964.1"/>
    <property type="molecule type" value="Genomic_DNA"/>
</dbReference>
<dbReference type="RefSeq" id="WP_000818789.1">
    <property type="nucleotide sequence ID" value="NC_011772.1"/>
</dbReference>
<dbReference type="SMR" id="B7IJZ9"/>
<dbReference type="KEGG" id="bcg:BCG9842_B0527"/>
<dbReference type="HOGENOM" id="CLU_015486_0_2_9"/>
<dbReference type="UniPathway" id="UPA00655">
    <property type="reaction ID" value="UER00711"/>
</dbReference>
<dbReference type="Proteomes" id="UP000006744">
    <property type="component" value="Chromosome"/>
</dbReference>
<dbReference type="GO" id="GO:0009317">
    <property type="term" value="C:acetyl-CoA carboxylase complex"/>
    <property type="evidence" value="ECO:0007669"/>
    <property type="project" value="InterPro"/>
</dbReference>
<dbReference type="GO" id="GO:0003989">
    <property type="term" value="F:acetyl-CoA carboxylase activity"/>
    <property type="evidence" value="ECO:0007669"/>
    <property type="project" value="InterPro"/>
</dbReference>
<dbReference type="GO" id="GO:0005524">
    <property type="term" value="F:ATP binding"/>
    <property type="evidence" value="ECO:0007669"/>
    <property type="project" value="UniProtKB-KW"/>
</dbReference>
<dbReference type="GO" id="GO:0016743">
    <property type="term" value="F:carboxyl- or carbamoyltransferase activity"/>
    <property type="evidence" value="ECO:0007669"/>
    <property type="project" value="UniProtKB-UniRule"/>
</dbReference>
<dbReference type="GO" id="GO:0006633">
    <property type="term" value="P:fatty acid biosynthetic process"/>
    <property type="evidence" value="ECO:0007669"/>
    <property type="project" value="UniProtKB-KW"/>
</dbReference>
<dbReference type="GO" id="GO:2001295">
    <property type="term" value="P:malonyl-CoA biosynthetic process"/>
    <property type="evidence" value="ECO:0007669"/>
    <property type="project" value="UniProtKB-UniRule"/>
</dbReference>
<dbReference type="Gene3D" id="3.90.226.10">
    <property type="entry name" value="2-enoyl-CoA Hydratase, Chain A, domain 1"/>
    <property type="match status" value="1"/>
</dbReference>
<dbReference type="HAMAP" id="MF_00823">
    <property type="entry name" value="AcetylCoA_CT_alpha"/>
    <property type="match status" value="1"/>
</dbReference>
<dbReference type="InterPro" id="IPR001095">
    <property type="entry name" value="Acetyl_CoA_COase_a_su"/>
</dbReference>
<dbReference type="InterPro" id="IPR029045">
    <property type="entry name" value="ClpP/crotonase-like_dom_sf"/>
</dbReference>
<dbReference type="InterPro" id="IPR011763">
    <property type="entry name" value="COA_CT_C"/>
</dbReference>
<dbReference type="NCBIfam" id="TIGR00513">
    <property type="entry name" value="accA"/>
    <property type="match status" value="1"/>
</dbReference>
<dbReference type="NCBIfam" id="NF041504">
    <property type="entry name" value="AccA_sub"/>
    <property type="match status" value="1"/>
</dbReference>
<dbReference type="NCBIfam" id="NF004344">
    <property type="entry name" value="PRK05724.1"/>
    <property type="match status" value="1"/>
</dbReference>
<dbReference type="PANTHER" id="PTHR42853">
    <property type="entry name" value="ACETYL-COENZYME A CARBOXYLASE CARBOXYL TRANSFERASE SUBUNIT ALPHA"/>
    <property type="match status" value="1"/>
</dbReference>
<dbReference type="PANTHER" id="PTHR42853:SF3">
    <property type="entry name" value="ACETYL-COENZYME A CARBOXYLASE CARBOXYL TRANSFERASE SUBUNIT ALPHA, CHLOROPLASTIC"/>
    <property type="match status" value="1"/>
</dbReference>
<dbReference type="Pfam" id="PF03255">
    <property type="entry name" value="ACCA"/>
    <property type="match status" value="1"/>
</dbReference>
<dbReference type="PRINTS" id="PR01069">
    <property type="entry name" value="ACCCTRFRASEA"/>
</dbReference>
<dbReference type="SUPFAM" id="SSF52096">
    <property type="entry name" value="ClpP/crotonase"/>
    <property type="match status" value="1"/>
</dbReference>
<dbReference type="PROSITE" id="PS50989">
    <property type="entry name" value="COA_CT_CTER"/>
    <property type="match status" value="1"/>
</dbReference>
<protein>
    <recommendedName>
        <fullName evidence="1">Acetyl-coenzyme A carboxylase carboxyl transferase subunit alpha</fullName>
        <shortName evidence="1">ACCase subunit alpha</shortName>
        <shortName evidence="1">Acetyl-CoA carboxylase carboxyltransferase subunit alpha</shortName>
        <ecNumber evidence="1">2.1.3.15</ecNumber>
    </recommendedName>
</protein>
<keyword id="KW-0067">ATP-binding</keyword>
<keyword id="KW-0963">Cytoplasm</keyword>
<keyword id="KW-0275">Fatty acid biosynthesis</keyword>
<keyword id="KW-0276">Fatty acid metabolism</keyword>
<keyword id="KW-0444">Lipid biosynthesis</keyword>
<keyword id="KW-0443">Lipid metabolism</keyword>
<keyword id="KW-0547">Nucleotide-binding</keyword>
<keyword id="KW-0808">Transferase</keyword>
<sequence>MAELEFEKPVVELRNKIRELKDYTKNSQMDFSEEIRILEDKLENLEEDIYGNLKVWDRVQIARHAERPTTLDYIEHLFTDFFECHGDRLFGDDAAIVGGIAKYKGMPVTVIGHQRGKDTKENIRRNFGMPHPEGYRKALRLMKQAEKFNRPIICFIDTKGAYPGKAAEERGQSEAIARNLFEMAGLTVPVICIVIGEGGSGGALGLGVGDYIHMLENSTYSVITPEGAAAILWKDAGKAKEAAEAMKITAADLKELGVIDEIIPEAKGGAHRNLSKQSENIDLMIRKTFEQLNGISKDELIEKRYEKYMKIGQVSFSNASIGIK</sequence>
<organism>
    <name type="scientific">Bacillus cereus (strain G9842)</name>
    <dbReference type="NCBI Taxonomy" id="405531"/>
    <lineage>
        <taxon>Bacteria</taxon>
        <taxon>Bacillati</taxon>
        <taxon>Bacillota</taxon>
        <taxon>Bacilli</taxon>
        <taxon>Bacillales</taxon>
        <taxon>Bacillaceae</taxon>
        <taxon>Bacillus</taxon>
        <taxon>Bacillus cereus group</taxon>
    </lineage>
</organism>
<feature type="chain" id="PRO_1000134457" description="Acetyl-coenzyme A carboxylase carboxyl transferase subunit alpha">
    <location>
        <begin position="1"/>
        <end position="324"/>
    </location>
</feature>
<feature type="domain" description="CoA carboxyltransferase C-terminal" evidence="2">
    <location>
        <begin position="37"/>
        <end position="291"/>
    </location>
</feature>
<proteinExistence type="inferred from homology"/>
<reference key="1">
    <citation type="submission" date="2008-10" db="EMBL/GenBank/DDBJ databases">
        <title>Genome sequence of Bacillus cereus G9842.</title>
        <authorList>
            <person name="Dodson R.J."/>
            <person name="Durkin A.S."/>
            <person name="Rosovitz M.J."/>
            <person name="Rasko D.A."/>
            <person name="Hoffmaster A."/>
            <person name="Ravel J."/>
            <person name="Sutton G."/>
        </authorList>
    </citation>
    <scope>NUCLEOTIDE SEQUENCE [LARGE SCALE GENOMIC DNA]</scope>
    <source>
        <strain>G9842</strain>
    </source>
</reference>
<gene>
    <name evidence="1" type="primary">accA</name>
    <name type="ordered locus">BCG9842_B0527</name>
</gene>
<name>ACCA_BACC2</name>
<comment type="function">
    <text evidence="1">Component of the acetyl coenzyme A carboxylase (ACC) complex. First, biotin carboxylase catalyzes the carboxylation of biotin on its carrier protein (BCCP) and then the CO(2) group is transferred by the carboxyltransferase to acetyl-CoA to form malonyl-CoA.</text>
</comment>
<comment type="catalytic activity">
    <reaction evidence="1">
        <text>N(6)-carboxybiotinyl-L-lysyl-[protein] + acetyl-CoA = N(6)-biotinyl-L-lysyl-[protein] + malonyl-CoA</text>
        <dbReference type="Rhea" id="RHEA:54728"/>
        <dbReference type="Rhea" id="RHEA-COMP:10505"/>
        <dbReference type="Rhea" id="RHEA-COMP:10506"/>
        <dbReference type="ChEBI" id="CHEBI:57288"/>
        <dbReference type="ChEBI" id="CHEBI:57384"/>
        <dbReference type="ChEBI" id="CHEBI:83144"/>
        <dbReference type="ChEBI" id="CHEBI:83145"/>
        <dbReference type="EC" id="2.1.3.15"/>
    </reaction>
</comment>
<comment type="pathway">
    <text evidence="1">Lipid metabolism; malonyl-CoA biosynthesis; malonyl-CoA from acetyl-CoA: step 1/1.</text>
</comment>
<comment type="subunit">
    <text evidence="1">Acetyl-CoA carboxylase is a heterohexamer composed of biotin carboxyl carrier protein (AccB), biotin carboxylase (AccC) and two subunits each of ACCase subunit alpha (AccA) and ACCase subunit beta (AccD).</text>
</comment>
<comment type="subcellular location">
    <subcellularLocation>
        <location evidence="1">Cytoplasm</location>
    </subcellularLocation>
</comment>
<comment type="similarity">
    <text evidence="1">Belongs to the AccA family.</text>
</comment>
<accession>B7IJZ9</accession>
<evidence type="ECO:0000255" key="1">
    <source>
        <dbReference type="HAMAP-Rule" id="MF_00823"/>
    </source>
</evidence>
<evidence type="ECO:0000255" key="2">
    <source>
        <dbReference type="PROSITE-ProRule" id="PRU01137"/>
    </source>
</evidence>